<gene>
    <name type="primary">INA</name>
    <name type="synonym">NEF5</name>
</gene>
<feature type="chain" id="PRO_0000063783" description="Alpha-internexin">
    <location>
        <begin position="1"/>
        <end position="499"/>
    </location>
</feature>
<feature type="domain" description="IF rod" evidence="4">
    <location>
        <begin position="94"/>
        <end position="407"/>
    </location>
</feature>
<feature type="region of interest" description="Head">
    <location>
        <begin position="1"/>
        <end position="87"/>
    </location>
</feature>
<feature type="region of interest" description="Coil 1A">
    <location>
        <begin position="88"/>
        <end position="129"/>
    </location>
</feature>
<feature type="region of interest" description="Linker 1">
    <location>
        <begin position="130"/>
        <end position="142"/>
    </location>
</feature>
<feature type="region of interest" description="Coil 1B">
    <location>
        <begin position="143"/>
        <end position="238"/>
    </location>
</feature>
<feature type="region of interest" description="Linker 2">
    <location>
        <begin position="239"/>
        <end position="262"/>
    </location>
</feature>
<feature type="region of interest" description="Coil 2">
    <location>
        <begin position="263"/>
        <end position="408"/>
    </location>
</feature>
<feature type="region of interest" description="Tail">
    <location>
        <begin position="409"/>
        <end position="499"/>
    </location>
</feature>
<feature type="region of interest" description="Disordered" evidence="5">
    <location>
        <begin position="441"/>
        <end position="466"/>
    </location>
</feature>
<feature type="modified residue" description="Phosphoserine" evidence="3">
    <location>
        <position position="72"/>
    </location>
</feature>
<feature type="modified residue" description="Phosphoserine" evidence="3">
    <location>
        <position position="219"/>
    </location>
</feature>
<feature type="modified residue" description="N6-acetyllysine" evidence="10">
    <location>
        <position position="290"/>
    </location>
</feature>
<feature type="modified residue" description="Phosphoserine" evidence="3">
    <location>
        <position position="335"/>
    </location>
</feature>
<feature type="modified residue" description="Phosphoserine" evidence="2">
    <location>
        <position position="469"/>
    </location>
</feature>
<feature type="modified residue" description="Phosphoserine" evidence="9">
    <location>
        <position position="496"/>
    </location>
</feature>
<feature type="sequence variant" id="VAR_049808" description="In dbSNP:rs1063455." evidence="7">
    <original>T</original>
    <variation>S</variation>
    <location>
        <position position="92"/>
    </location>
</feature>
<feature type="sequence variant" id="VAR_036369" description="In a breast cancer sample; somatic mutation." evidence="6">
    <original>E</original>
    <variation>Q</variation>
    <location>
        <position position="110"/>
    </location>
</feature>
<feature type="sequence variant" id="VAR_033497" description="In dbSNP:rs1063456.">
    <original>D</original>
    <variation>H</variation>
    <location>
        <position position="149"/>
    </location>
</feature>
<feature type="sequence conflict" description="In Ref. 1; AAB34482." evidence="8" ref="1">
    <original>GFRSQ</original>
    <variation>ASVE</variation>
    <location>
        <begin position="37"/>
        <end position="41"/>
    </location>
</feature>
<feature type="sequence conflict" description="In Ref. 1; AAB34482." evidence="8" ref="1">
    <original>R</original>
    <variation>A</variation>
    <location>
        <position position="67"/>
    </location>
</feature>
<feature type="sequence conflict" description="In Ref. 1; AAB34482." evidence="8" ref="1">
    <original>ALRQR</original>
    <variation>RCDT</variation>
    <location>
        <begin position="128"/>
        <end position="132"/>
    </location>
</feature>
<feature type="sequence conflict" description="In Ref. 1; AAB34482." evidence="8" ref="1">
    <original>E</original>
    <variation>Q</variation>
    <location>
        <position position="141"/>
    </location>
</feature>
<feature type="sequence conflict" description="In Ref. 1; AAB34482." evidence="8" ref="1">
    <original>LRDLRA</original>
    <variation>PRHLP</variation>
    <location>
        <begin position="147"/>
        <end position="152"/>
    </location>
</feature>
<feature type="sequence conflict" description="In Ref. 1; AAB34482." evidence="8" ref="1">
    <original>GAERALKA</original>
    <variation>RRARLKR</variation>
    <location>
        <begin position="191"/>
        <end position="198"/>
    </location>
</feature>
<feature type="sequence conflict" description="In Ref. 1; AAB34482." evidence="8" ref="1">
    <original>A</original>
    <variation>R</variation>
    <location>
        <position position="244"/>
    </location>
</feature>
<feature type="sequence conflict" description="In Ref. 1; AAB34482." evidence="8" ref="1">
    <original>S</original>
    <variation>A</variation>
    <location>
        <position position="263"/>
    </location>
</feature>
<feature type="sequence conflict" description="In Ref. 1; AAB34482." evidence="8" ref="1">
    <original>S</original>
    <variation>T</variation>
    <location>
        <position position="301"/>
    </location>
</feature>
<feature type="sequence conflict" description="In Ref. 1; AAB34482." evidence="8" ref="1">
    <original>EE</original>
    <variation>DQ</variation>
    <location>
        <begin position="310"/>
        <end position="311"/>
    </location>
</feature>
<feature type="sequence conflict" description="In Ref. 1; AAB34482." evidence="8" ref="1">
    <location>
        <position position="318"/>
    </location>
</feature>
<name>AINX_HUMAN</name>
<reference key="1">
    <citation type="journal article" date="1995" name="Brain Res. Mol. Brain Res.">
        <title>Cloning and developmental expression of human 66 kd neurofilament protein.</title>
        <authorList>
            <person name="Chan S.-O."/>
            <person name="Chiu F.-C."/>
        </authorList>
    </citation>
    <scope>NUCLEOTIDE SEQUENCE [MRNA]</scope>
    <scope>VARIANT SER-92</scope>
    <source>
        <tissue>Fetal brain</tissue>
    </source>
</reference>
<reference key="2">
    <citation type="journal article" date="2004" name="Nature">
        <title>The DNA sequence and comparative analysis of human chromosome 10.</title>
        <authorList>
            <person name="Deloukas P."/>
            <person name="Earthrowl M.E."/>
            <person name="Grafham D.V."/>
            <person name="Rubenfield M."/>
            <person name="French L."/>
            <person name="Steward C.A."/>
            <person name="Sims S.K."/>
            <person name="Jones M.C."/>
            <person name="Searle S."/>
            <person name="Scott C."/>
            <person name="Howe K."/>
            <person name="Hunt S.E."/>
            <person name="Andrews T.D."/>
            <person name="Gilbert J.G.R."/>
            <person name="Swarbreck D."/>
            <person name="Ashurst J.L."/>
            <person name="Taylor A."/>
            <person name="Battles J."/>
            <person name="Bird C.P."/>
            <person name="Ainscough R."/>
            <person name="Almeida J.P."/>
            <person name="Ashwell R.I.S."/>
            <person name="Ambrose K.D."/>
            <person name="Babbage A.K."/>
            <person name="Bagguley C.L."/>
            <person name="Bailey J."/>
            <person name="Banerjee R."/>
            <person name="Bates K."/>
            <person name="Beasley H."/>
            <person name="Bray-Allen S."/>
            <person name="Brown A.J."/>
            <person name="Brown J.Y."/>
            <person name="Burford D.C."/>
            <person name="Burrill W."/>
            <person name="Burton J."/>
            <person name="Cahill P."/>
            <person name="Camire D."/>
            <person name="Carter N.P."/>
            <person name="Chapman J.C."/>
            <person name="Clark S.Y."/>
            <person name="Clarke G."/>
            <person name="Clee C.M."/>
            <person name="Clegg S."/>
            <person name="Corby N."/>
            <person name="Coulson A."/>
            <person name="Dhami P."/>
            <person name="Dutta I."/>
            <person name="Dunn M."/>
            <person name="Faulkner L."/>
            <person name="Frankish A."/>
            <person name="Frankland J.A."/>
            <person name="Garner P."/>
            <person name="Garnett J."/>
            <person name="Gribble S."/>
            <person name="Griffiths C."/>
            <person name="Grocock R."/>
            <person name="Gustafson E."/>
            <person name="Hammond S."/>
            <person name="Harley J.L."/>
            <person name="Hart E."/>
            <person name="Heath P.D."/>
            <person name="Ho T.P."/>
            <person name="Hopkins B."/>
            <person name="Horne J."/>
            <person name="Howden P.J."/>
            <person name="Huckle E."/>
            <person name="Hynds C."/>
            <person name="Johnson C."/>
            <person name="Johnson D."/>
            <person name="Kana A."/>
            <person name="Kay M."/>
            <person name="Kimberley A.M."/>
            <person name="Kershaw J.K."/>
            <person name="Kokkinaki M."/>
            <person name="Laird G.K."/>
            <person name="Lawlor S."/>
            <person name="Lee H.M."/>
            <person name="Leongamornlert D.A."/>
            <person name="Laird G."/>
            <person name="Lloyd C."/>
            <person name="Lloyd D.M."/>
            <person name="Loveland J."/>
            <person name="Lovell J."/>
            <person name="McLaren S."/>
            <person name="McLay K.E."/>
            <person name="McMurray A."/>
            <person name="Mashreghi-Mohammadi M."/>
            <person name="Matthews L."/>
            <person name="Milne S."/>
            <person name="Nickerson T."/>
            <person name="Nguyen M."/>
            <person name="Overton-Larty E."/>
            <person name="Palmer S.A."/>
            <person name="Pearce A.V."/>
            <person name="Peck A.I."/>
            <person name="Pelan S."/>
            <person name="Phillimore B."/>
            <person name="Porter K."/>
            <person name="Rice C.M."/>
            <person name="Rogosin A."/>
            <person name="Ross M.T."/>
            <person name="Sarafidou T."/>
            <person name="Sehra H.K."/>
            <person name="Shownkeen R."/>
            <person name="Skuce C.D."/>
            <person name="Smith M."/>
            <person name="Standring L."/>
            <person name="Sycamore N."/>
            <person name="Tester J."/>
            <person name="Thorpe A."/>
            <person name="Torcasso W."/>
            <person name="Tracey A."/>
            <person name="Tromans A."/>
            <person name="Tsolas J."/>
            <person name="Wall M."/>
            <person name="Walsh J."/>
            <person name="Wang H."/>
            <person name="Weinstock K."/>
            <person name="West A.P."/>
            <person name="Willey D.L."/>
            <person name="Whitehead S.L."/>
            <person name="Wilming L."/>
            <person name="Wray P.W."/>
            <person name="Young L."/>
            <person name="Chen Y."/>
            <person name="Lovering R.C."/>
            <person name="Moschonas N.K."/>
            <person name="Siebert R."/>
            <person name="Fechtel K."/>
            <person name="Bentley D."/>
            <person name="Durbin R.M."/>
            <person name="Hubbard T."/>
            <person name="Doucette-Stamm L."/>
            <person name="Beck S."/>
            <person name="Smith D.R."/>
            <person name="Rogers J."/>
        </authorList>
    </citation>
    <scope>NUCLEOTIDE SEQUENCE [LARGE SCALE GENOMIC DNA]</scope>
</reference>
<reference key="3">
    <citation type="submission" date="2005-09" db="EMBL/GenBank/DDBJ databases">
        <authorList>
            <person name="Mural R.J."/>
            <person name="Istrail S."/>
            <person name="Sutton G.G."/>
            <person name="Florea L."/>
            <person name="Halpern A.L."/>
            <person name="Mobarry C.M."/>
            <person name="Lippert R."/>
            <person name="Walenz B."/>
            <person name="Shatkay H."/>
            <person name="Dew I."/>
            <person name="Miller J.R."/>
            <person name="Flanigan M.J."/>
            <person name="Edwards N.J."/>
            <person name="Bolanos R."/>
            <person name="Fasulo D."/>
            <person name="Halldorsson B.V."/>
            <person name="Hannenhalli S."/>
            <person name="Turner R."/>
            <person name="Yooseph S."/>
            <person name="Lu F."/>
            <person name="Nusskern D.R."/>
            <person name="Shue B.C."/>
            <person name="Zheng X.H."/>
            <person name="Zhong F."/>
            <person name="Delcher A.L."/>
            <person name="Huson D.H."/>
            <person name="Kravitz S.A."/>
            <person name="Mouchard L."/>
            <person name="Reinert K."/>
            <person name="Remington K.A."/>
            <person name="Clark A.G."/>
            <person name="Waterman M.S."/>
            <person name="Eichler E.E."/>
            <person name="Adams M.D."/>
            <person name="Hunkapiller M.W."/>
            <person name="Myers E.W."/>
            <person name="Venter J.C."/>
        </authorList>
    </citation>
    <scope>NUCLEOTIDE SEQUENCE [LARGE SCALE GENOMIC DNA]</scope>
</reference>
<reference key="4">
    <citation type="journal article" date="2004" name="Genome Res.">
        <title>The status, quality, and expansion of the NIH full-length cDNA project: the Mammalian Gene Collection (MGC).</title>
        <authorList>
            <consortium name="The MGC Project Team"/>
        </authorList>
    </citation>
    <scope>NUCLEOTIDE SEQUENCE [LARGE SCALE MRNA]</scope>
    <source>
        <tissue>Brain</tissue>
    </source>
</reference>
<reference key="5">
    <citation type="submission" date="2008-12" db="UniProtKB">
        <authorList>
            <person name="Lubec G."/>
            <person name="Afjehi-Sadat L."/>
            <person name="Chen W.-Q."/>
            <person name="Sun Y."/>
        </authorList>
    </citation>
    <scope>PROTEIN SEQUENCE OF 46-83; 105-111; 121-130; 139-145; 216-228; 279-288; 323-330; 339-367; 378-397 AND 407-430</scope>
    <scope>IDENTIFICATION BY MASS SPECTROMETRY</scope>
    <source>
        <tissue>Brain</tissue>
        <tissue>Cajal-Retzius cell</tissue>
        <tissue>Fetal brain cortex</tissue>
    </source>
</reference>
<reference key="6">
    <citation type="journal article" date="2007" name="Science">
        <title>ATM and ATR substrate analysis reveals extensive protein networks responsive to DNA damage.</title>
        <authorList>
            <person name="Matsuoka S."/>
            <person name="Ballif B.A."/>
            <person name="Smogorzewska A."/>
            <person name="McDonald E.R. III"/>
            <person name="Hurov K.E."/>
            <person name="Luo J."/>
            <person name="Bakalarski C.E."/>
            <person name="Zhao Z."/>
            <person name="Solimini N."/>
            <person name="Lerenthal Y."/>
            <person name="Shiloh Y."/>
            <person name="Gygi S.P."/>
            <person name="Elledge S.J."/>
        </authorList>
    </citation>
    <scope>PHOSPHORYLATION [LARGE SCALE ANALYSIS] AT SER-496</scope>
    <scope>IDENTIFICATION BY MASS SPECTROMETRY [LARGE SCALE ANALYSIS]</scope>
    <source>
        <tissue>Embryonic kidney</tissue>
    </source>
</reference>
<reference key="7">
    <citation type="journal article" date="2009" name="Science">
        <title>Lysine acetylation targets protein complexes and co-regulates major cellular functions.</title>
        <authorList>
            <person name="Choudhary C."/>
            <person name="Kumar C."/>
            <person name="Gnad F."/>
            <person name="Nielsen M.L."/>
            <person name="Rehman M."/>
            <person name="Walther T.C."/>
            <person name="Olsen J.V."/>
            <person name="Mann M."/>
        </authorList>
    </citation>
    <scope>ACETYLATION [LARGE SCALE ANALYSIS] AT LYS-290</scope>
    <scope>IDENTIFICATION BY MASS SPECTROMETRY [LARGE SCALE ANALYSIS]</scope>
</reference>
<reference key="8">
    <citation type="journal article" date="2006" name="Science">
        <title>The consensus coding sequences of human breast and colorectal cancers.</title>
        <authorList>
            <person name="Sjoeblom T."/>
            <person name="Jones S."/>
            <person name="Wood L.D."/>
            <person name="Parsons D.W."/>
            <person name="Lin J."/>
            <person name="Barber T.D."/>
            <person name="Mandelker D."/>
            <person name="Leary R.J."/>
            <person name="Ptak J."/>
            <person name="Silliman N."/>
            <person name="Szabo S."/>
            <person name="Buckhaults P."/>
            <person name="Farrell C."/>
            <person name="Meeh P."/>
            <person name="Markowitz S.D."/>
            <person name="Willis J."/>
            <person name="Dawson D."/>
            <person name="Willson J.K.V."/>
            <person name="Gazdar A.F."/>
            <person name="Hartigan J."/>
            <person name="Wu L."/>
            <person name="Liu C."/>
            <person name="Parmigiani G."/>
            <person name="Park B.H."/>
            <person name="Bachman K.E."/>
            <person name="Papadopoulos N."/>
            <person name="Vogelstein B."/>
            <person name="Kinzler K.W."/>
            <person name="Velculescu V.E."/>
        </authorList>
    </citation>
    <scope>VARIANT [LARGE SCALE ANALYSIS] GLN-110</scope>
</reference>
<proteinExistence type="evidence at protein level"/>
<comment type="function">
    <text evidence="3">Class-IV neuronal intermediate filament that is able to self-assemble. It is involved in the morphogenesis of neurons. It may form an independent structural network without the involvement of other neurofilaments or it may cooperate with NEFL to form the filamentous backbone to which NEFM and NEFH attach to form the cross-bridges. May also cooperate with the neuronal intermediate filament protein PRPH to form filamentous networks (By similarity).</text>
</comment>
<comment type="subunit">
    <text evidence="2">Forms homodimers (in vitro) (By similarity). Forms heterodimers with NEFL, NEFM or NEFH (in vitro) (By similarity).</text>
</comment>
<comment type="interaction">
    <interactant intactId="EBI-366258">
        <id>Q16352</id>
    </interactant>
    <interactant intactId="EBI-77613">
        <id>P05067</id>
        <label>APP</label>
    </interactant>
    <organismsDiffer>false</organismsDiffer>
    <experiments>3</experiments>
</comment>
<comment type="interaction">
    <interactant intactId="EBI-366258">
        <id>Q16352</id>
    </interactant>
    <interactant intactId="EBI-11173743">
        <id>O60741</id>
        <label>HCN1</label>
    </interactant>
    <organismsDiffer>false</organismsDiffer>
    <experiments>4</experiments>
</comment>
<comment type="interaction">
    <interactant intactId="EBI-366258">
        <id>Q16352</id>
    </interactant>
    <interactant intactId="EBI-3893060">
        <id>Q99797</id>
        <label>MIPEP</label>
    </interactant>
    <organismsDiffer>false</organismsDiffer>
    <experiments>2</experiments>
</comment>
<comment type="interaction">
    <interactant intactId="EBI-366258">
        <id>Q16352</id>
    </interactant>
    <interactant intactId="EBI-476295">
        <id>P31947</id>
        <label>SFN</label>
    </interactant>
    <organismsDiffer>false</organismsDiffer>
    <experiments>2</experiments>
</comment>
<comment type="interaction">
    <interactant intactId="EBI-366258">
        <id>Q16352</id>
    </interactant>
    <interactant intactId="EBI-985879">
        <id>P37840</id>
        <label>SNCA</label>
    </interactant>
    <organismsDiffer>false</organismsDiffer>
    <experiments>3</experiments>
</comment>
<comment type="interaction">
    <interactant intactId="EBI-366258">
        <id>Q16352</id>
    </interactant>
    <interactant intactId="EBI-356498">
        <id>P62258</id>
        <label>YWHAE</label>
    </interactant>
    <organismsDiffer>false</organismsDiffer>
    <experiments>2</experiments>
</comment>
<comment type="tissue specificity">
    <text>Found predominantly in adult CNS.</text>
</comment>
<comment type="developmental stage">
    <text>Expressed in brain as early as the 16th week of gestation, and increased rapidly and reached a steady state level by the 18th week of gestation.</text>
</comment>
<comment type="PTM">
    <text evidence="1">O-glycosylated.</text>
</comment>
<comment type="similarity">
    <text evidence="4">Belongs to the intermediate filament family.</text>
</comment>
<keyword id="KW-0007">Acetylation</keyword>
<keyword id="KW-0175">Coiled coil</keyword>
<keyword id="KW-0217">Developmental protein</keyword>
<keyword id="KW-0221">Differentiation</keyword>
<keyword id="KW-0903">Direct protein sequencing</keyword>
<keyword id="KW-0325">Glycoprotein</keyword>
<keyword id="KW-0403">Intermediate filament</keyword>
<keyword id="KW-0524">Neurogenesis</keyword>
<keyword id="KW-0597">Phosphoprotein</keyword>
<keyword id="KW-1267">Proteomics identification</keyword>
<keyword id="KW-1185">Reference proteome</keyword>
<dbReference type="EMBL" id="S78296">
    <property type="protein sequence ID" value="AAB34482.1"/>
    <property type="molecule type" value="mRNA"/>
</dbReference>
<dbReference type="EMBL" id="AL591408">
    <property type="status" value="NOT_ANNOTATED_CDS"/>
    <property type="molecule type" value="Genomic_DNA"/>
</dbReference>
<dbReference type="EMBL" id="CH471066">
    <property type="protein sequence ID" value="EAW49653.1"/>
    <property type="molecule type" value="Genomic_DNA"/>
</dbReference>
<dbReference type="EMBL" id="BC006359">
    <property type="protein sequence ID" value="AAH06359.1"/>
    <property type="molecule type" value="mRNA"/>
</dbReference>
<dbReference type="CCDS" id="CCDS7545.1"/>
<dbReference type="PIR" id="I52658">
    <property type="entry name" value="I52658"/>
</dbReference>
<dbReference type="RefSeq" id="NP_116116.1">
    <property type="nucleotide sequence ID" value="NM_032727.4"/>
</dbReference>
<dbReference type="SMR" id="Q16352"/>
<dbReference type="BioGRID" id="114566">
    <property type="interactions" value="134"/>
</dbReference>
<dbReference type="FunCoup" id="Q16352">
    <property type="interactions" value="720"/>
</dbReference>
<dbReference type="IntAct" id="Q16352">
    <property type="interactions" value="99"/>
</dbReference>
<dbReference type="MINT" id="Q16352"/>
<dbReference type="STRING" id="9606.ENSP00000358865"/>
<dbReference type="GlyCosmos" id="Q16352">
    <property type="glycosylation" value="6 sites, 1 glycan"/>
</dbReference>
<dbReference type="GlyGen" id="Q16352">
    <property type="glycosylation" value="6 sites, 1 O-linked glycan (6 sites)"/>
</dbReference>
<dbReference type="iPTMnet" id="Q16352"/>
<dbReference type="PhosphoSitePlus" id="Q16352"/>
<dbReference type="SwissPalm" id="Q16352"/>
<dbReference type="BioMuta" id="INA"/>
<dbReference type="DMDM" id="20141266"/>
<dbReference type="jPOST" id="Q16352"/>
<dbReference type="MassIVE" id="Q16352"/>
<dbReference type="PaxDb" id="9606-ENSP00000358865"/>
<dbReference type="PeptideAtlas" id="Q16352"/>
<dbReference type="ProteomicsDB" id="60861"/>
<dbReference type="Pumba" id="Q16352"/>
<dbReference type="Antibodypedia" id="1538">
    <property type="antibodies" value="493 antibodies from 40 providers"/>
</dbReference>
<dbReference type="DNASU" id="9118"/>
<dbReference type="Ensembl" id="ENST00000369849.9">
    <property type="protein sequence ID" value="ENSP00000358865.4"/>
    <property type="gene ID" value="ENSG00000148798.11"/>
</dbReference>
<dbReference type="GeneID" id="9118"/>
<dbReference type="KEGG" id="hsa:9118"/>
<dbReference type="MANE-Select" id="ENST00000369849.9">
    <property type="protein sequence ID" value="ENSP00000358865.4"/>
    <property type="RefSeq nucleotide sequence ID" value="NM_032727.4"/>
    <property type="RefSeq protein sequence ID" value="NP_116116.1"/>
</dbReference>
<dbReference type="UCSC" id="uc001kws.3">
    <property type="organism name" value="human"/>
</dbReference>
<dbReference type="AGR" id="HGNC:6057"/>
<dbReference type="CTD" id="9118"/>
<dbReference type="DisGeNET" id="9118"/>
<dbReference type="GeneCards" id="INA"/>
<dbReference type="HGNC" id="HGNC:6057">
    <property type="gene designation" value="INA"/>
</dbReference>
<dbReference type="HPA" id="ENSG00000148798">
    <property type="expression patterns" value="Group enriched (brain, pituitary gland, retina)"/>
</dbReference>
<dbReference type="MalaCards" id="INA"/>
<dbReference type="MIM" id="605338">
    <property type="type" value="gene"/>
</dbReference>
<dbReference type="neXtProt" id="NX_Q16352"/>
<dbReference type="OpenTargets" id="ENSG00000148798"/>
<dbReference type="PharmGKB" id="PA29867"/>
<dbReference type="VEuPathDB" id="HostDB:ENSG00000148798"/>
<dbReference type="eggNOG" id="ENOG502RAU0">
    <property type="taxonomic scope" value="Eukaryota"/>
</dbReference>
<dbReference type="GeneTree" id="ENSGT00940000154418"/>
<dbReference type="HOGENOM" id="CLU_012560_7_3_1"/>
<dbReference type="InParanoid" id="Q16352"/>
<dbReference type="OMA" id="CASSYRK"/>
<dbReference type="OrthoDB" id="2441647at2759"/>
<dbReference type="PAN-GO" id="Q16352">
    <property type="GO annotations" value="5 GO annotations based on evolutionary models"/>
</dbReference>
<dbReference type="PhylomeDB" id="Q16352"/>
<dbReference type="TreeFam" id="TF330122"/>
<dbReference type="PathwayCommons" id="Q16352"/>
<dbReference type="SignaLink" id="Q16352"/>
<dbReference type="BioGRID-ORCS" id="9118">
    <property type="hits" value="7 hits in 1143 CRISPR screens"/>
</dbReference>
<dbReference type="CD-CODE" id="232F8A39">
    <property type="entry name" value="P-body"/>
</dbReference>
<dbReference type="CD-CODE" id="FB4E32DD">
    <property type="entry name" value="Presynaptic clusters and postsynaptic densities"/>
</dbReference>
<dbReference type="ChiTaRS" id="INA">
    <property type="organism name" value="human"/>
</dbReference>
<dbReference type="GenomeRNAi" id="9118"/>
<dbReference type="Pharos" id="Q16352">
    <property type="development level" value="Tbio"/>
</dbReference>
<dbReference type="PRO" id="PR:Q16352"/>
<dbReference type="Proteomes" id="UP000005640">
    <property type="component" value="Chromosome 10"/>
</dbReference>
<dbReference type="RNAct" id="Q16352">
    <property type="molecule type" value="protein"/>
</dbReference>
<dbReference type="Bgee" id="ENSG00000148798">
    <property type="expression patterns" value="Expressed in cortical plate and 128 other cell types or tissues"/>
</dbReference>
<dbReference type="GO" id="GO:0036464">
    <property type="term" value="C:cytoplasmic ribonucleoprotein granule"/>
    <property type="evidence" value="ECO:0000314"/>
    <property type="project" value="ParkinsonsUK-UCL"/>
</dbReference>
<dbReference type="GO" id="GO:0005615">
    <property type="term" value="C:extracellular space"/>
    <property type="evidence" value="ECO:0007005"/>
    <property type="project" value="UniProtKB"/>
</dbReference>
<dbReference type="GO" id="GO:0005882">
    <property type="term" value="C:intermediate filament"/>
    <property type="evidence" value="ECO:0000318"/>
    <property type="project" value="GO_Central"/>
</dbReference>
<dbReference type="GO" id="GO:0005883">
    <property type="term" value="C:neurofilament"/>
    <property type="evidence" value="ECO:0000304"/>
    <property type="project" value="ProtInc"/>
</dbReference>
<dbReference type="GO" id="GO:0099160">
    <property type="term" value="C:postsynaptic intermediate filament cytoskeleton"/>
    <property type="evidence" value="ECO:0000318"/>
    <property type="project" value="GO_Central"/>
</dbReference>
<dbReference type="GO" id="GO:0098685">
    <property type="term" value="C:Schaffer collateral - CA1 synapse"/>
    <property type="evidence" value="ECO:0007669"/>
    <property type="project" value="Ensembl"/>
</dbReference>
<dbReference type="GO" id="GO:0005200">
    <property type="term" value="F:structural constituent of cytoskeleton"/>
    <property type="evidence" value="ECO:0000304"/>
    <property type="project" value="ProtInc"/>
</dbReference>
<dbReference type="GO" id="GO:0099184">
    <property type="term" value="F:structural constituent of postsynaptic intermediate filament cytoskeleton"/>
    <property type="evidence" value="ECO:0000318"/>
    <property type="project" value="GO_Central"/>
</dbReference>
<dbReference type="GO" id="GO:0030154">
    <property type="term" value="P:cell differentiation"/>
    <property type="evidence" value="ECO:0007669"/>
    <property type="project" value="UniProtKB-KW"/>
</dbReference>
<dbReference type="GO" id="GO:1990830">
    <property type="term" value="P:cellular response to leukemia inhibitory factor"/>
    <property type="evidence" value="ECO:0007669"/>
    <property type="project" value="Ensembl"/>
</dbReference>
<dbReference type="GO" id="GO:0045109">
    <property type="term" value="P:intermediate filament organization"/>
    <property type="evidence" value="ECO:0000318"/>
    <property type="project" value="GO_Central"/>
</dbReference>
<dbReference type="GO" id="GO:0060052">
    <property type="term" value="P:neurofilament cytoskeleton organization"/>
    <property type="evidence" value="ECO:0007669"/>
    <property type="project" value="Ensembl"/>
</dbReference>
<dbReference type="GO" id="GO:0099170">
    <property type="term" value="P:postsynaptic modulation of chemical synaptic transmission"/>
    <property type="evidence" value="ECO:0007669"/>
    <property type="project" value="Ensembl"/>
</dbReference>
<dbReference type="GO" id="GO:0021762">
    <property type="term" value="P:substantia nigra development"/>
    <property type="evidence" value="ECO:0007007"/>
    <property type="project" value="UniProtKB"/>
</dbReference>
<dbReference type="FunFam" id="1.20.5.1160:FF:000001">
    <property type="entry name" value="Keratin type II"/>
    <property type="match status" value="1"/>
</dbReference>
<dbReference type="FunFam" id="1.20.5.170:FF:000002">
    <property type="entry name" value="Type I keratin KA11"/>
    <property type="match status" value="1"/>
</dbReference>
<dbReference type="FunFam" id="1.20.5.500:FF:000001">
    <property type="entry name" value="Type II keratin 23"/>
    <property type="match status" value="1"/>
</dbReference>
<dbReference type="Gene3D" id="1.20.5.170">
    <property type="match status" value="1"/>
</dbReference>
<dbReference type="Gene3D" id="1.20.5.500">
    <property type="entry name" value="Single helix bin"/>
    <property type="match status" value="1"/>
</dbReference>
<dbReference type="Gene3D" id="1.20.5.1160">
    <property type="entry name" value="Vasodilator-stimulated phosphoprotein"/>
    <property type="match status" value="1"/>
</dbReference>
<dbReference type="InterPro" id="IPR018039">
    <property type="entry name" value="IF_conserved"/>
</dbReference>
<dbReference type="InterPro" id="IPR039008">
    <property type="entry name" value="IF_rod_dom"/>
</dbReference>
<dbReference type="InterPro" id="IPR006821">
    <property type="entry name" value="Intermed_filament_DNA-bd"/>
</dbReference>
<dbReference type="InterPro" id="IPR050405">
    <property type="entry name" value="Intermediate_filament"/>
</dbReference>
<dbReference type="PANTHER" id="PTHR45652:SF18">
    <property type="entry name" value="ALPHA-INTERNEXIN"/>
    <property type="match status" value="1"/>
</dbReference>
<dbReference type="PANTHER" id="PTHR45652">
    <property type="entry name" value="GLIAL FIBRILLARY ACIDIC PROTEIN"/>
    <property type="match status" value="1"/>
</dbReference>
<dbReference type="Pfam" id="PF00038">
    <property type="entry name" value="Filament"/>
    <property type="match status" value="1"/>
</dbReference>
<dbReference type="Pfam" id="PF04732">
    <property type="entry name" value="Filament_head"/>
    <property type="match status" value="1"/>
</dbReference>
<dbReference type="SMART" id="SM01391">
    <property type="entry name" value="Filament"/>
    <property type="match status" value="1"/>
</dbReference>
<dbReference type="SUPFAM" id="SSF64593">
    <property type="entry name" value="Intermediate filament protein, coiled coil region"/>
    <property type="match status" value="2"/>
</dbReference>
<dbReference type="SUPFAM" id="SSF90257">
    <property type="entry name" value="Myosin rod fragments"/>
    <property type="match status" value="1"/>
</dbReference>
<dbReference type="PROSITE" id="PS00226">
    <property type="entry name" value="IF_ROD_1"/>
    <property type="match status" value="1"/>
</dbReference>
<dbReference type="PROSITE" id="PS51842">
    <property type="entry name" value="IF_ROD_2"/>
    <property type="match status" value="1"/>
</dbReference>
<accession>Q16352</accession>
<accession>B1AQK0</accession>
<accession>Q9BRC5</accession>
<organism>
    <name type="scientific">Homo sapiens</name>
    <name type="common">Human</name>
    <dbReference type="NCBI Taxonomy" id="9606"/>
    <lineage>
        <taxon>Eukaryota</taxon>
        <taxon>Metazoa</taxon>
        <taxon>Chordata</taxon>
        <taxon>Craniata</taxon>
        <taxon>Vertebrata</taxon>
        <taxon>Euteleostomi</taxon>
        <taxon>Mammalia</taxon>
        <taxon>Eutheria</taxon>
        <taxon>Euarchontoglires</taxon>
        <taxon>Primates</taxon>
        <taxon>Haplorrhini</taxon>
        <taxon>Catarrhini</taxon>
        <taxon>Hominidae</taxon>
        <taxon>Homo</taxon>
    </lineage>
</organism>
<sequence length="499" mass="55391">MSFGSEHYLCSSSSYRKVFGDGSRLSARLSGAGGAGGFRSQSLSRSNVASSAACSSASSLGLGLAYRRPPASDGLDLSQAAARTNEYKIIRTNEKEQLQGLNDRFAVFIEKVHQLETQNRALEAELAALRQRHAEPSRVGELFQRELRDLRAQLEEASSARSQALLERDGLAEEVQRLRARCEEESRGREGAERALKAQQRDVDGATLARLDLEKKVESLLDELAFVRQVHDEEVAELLATLQASSQAAAEVDVTVAKPDLTSALREIRAQYESLAAKNLQSAEEWYKSKFANLNEQAARSTEAIRASREEIHEYRRQLQARTIEIEGLRGANESLERQILELEERHSAEVAGYQDSIGQLENDLRNTKSEMARHLREYQDLLNVKMALDIEIAAYRKLLEGEETRFSTSGLSISGLNPLPNPSYLLPPRILSATTSKVSSTGLSLKKEEEEEEASKVASKKTSQIGESFEEILEETVISTKKTEKSNIEETTISSQKI</sequence>
<evidence type="ECO:0000250" key="1"/>
<evidence type="ECO:0000250" key="2">
    <source>
        <dbReference type="UniProtKB" id="P23565"/>
    </source>
</evidence>
<evidence type="ECO:0000250" key="3">
    <source>
        <dbReference type="UniProtKB" id="P46660"/>
    </source>
</evidence>
<evidence type="ECO:0000255" key="4">
    <source>
        <dbReference type="PROSITE-ProRule" id="PRU01188"/>
    </source>
</evidence>
<evidence type="ECO:0000256" key="5">
    <source>
        <dbReference type="SAM" id="MobiDB-lite"/>
    </source>
</evidence>
<evidence type="ECO:0000269" key="6">
    <source>
    </source>
</evidence>
<evidence type="ECO:0000269" key="7">
    <source>
    </source>
</evidence>
<evidence type="ECO:0000305" key="8"/>
<evidence type="ECO:0007744" key="9">
    <source>
    </source>
</evidence>
<evidence type="ECO:0007744" key="10">
    <source>
    </source>
</evidence>
<protein>
    <recommendedName>
        <fullName>Alpha-internexin</fullName>
        <shortName>Alpha-Inx</shortName>
    </recommendedName>
    <alternativeName>
        <fullName>66 kDa neurofilament protein</fullName>
        <shortName>NF-66</shortName>
        <shortName>Neurofilament-66</shortName>
    </alternativeName>
    <alternativeName>
        <fullName>Neurofilament 5</fullName>
    </alternativeName>
</protein>